<proteinExistence type="inferred from homology"/>
<protein>
    <recommendedName>
        <fullName evidence="1">Protoheme IX farnesyltransferase 1</fullName>
        <ecNumber evidence="1">2.5.1.141</ecNumber>
    </recommendedName>
    <alternativeName>
        <fullName evidence="1">Heme B farnesyltransferase 1</fullName>
    </alternativeName>
    <alternativeName>
        <fullName evidence="1">Heme O synthase 1</fullName>
    </alternativeName>
</protein>
<gene>
    <name evidence="1" type="primary">ctaB1</name>
    <name type="ordered locus">mll1047</name>
</gene>
<name>COXX1_RHILO</name>
<dbReference type="EC" id="2.5.1.141" evidence="1"/>
<dbReference type="EMBL" id="BA000012">
    <property type="protein sequence ID" value="BAB48512.1"/>
    <property type="molecule type" value="Genomic_DNA"/>
</dbReference>
<dbReference type="RefSeq" id="WP_010909866.1">
    <property type="nucleotide sequence ID" value="NC_002678.2"/>
</dbReference>
<dbReference type="SMR" id="Q98LF1"/>
<dbReference type="KEGG" id="mlo:mll1047"/>
<dbReference type="PATRIC" id="fig|266835.9.peg.846"/>
<dbReference type="eggNOG" id="COG0109">
    <property type="taxonomic scope" value="Bacteria"/>
</dbReference>
<dbReference type="HOGENOM" id="CLU_029631_0_2_5"/>
<dbReference type="UniPathway" id="UPA00834">
    <property type="reaction ID" value="UER00712"/>
</dbReference>
<dbReference type="Proteomes" id="UP000000552">
    <property type="component" value="Chromosome"/>
</dbReference>
<dbReference type="GO" id="GO:0005886">
    <property type="term" value="C:plasma membrane"/>
    <property type="evidence" value="ECO:0007669"/>
    <property type="project" value="UniProtKB-SubCell"/>
</dbReference>
<dbReference type="GO" id="GO:0008495">
    <property type="term" value="F:protoheme IX farnesyltransferase activity"/>
    <property type="evidence" value="ECO:0007669"/>
    <property type="project" value="UniProtKB-UniRule"/>
</dbReference>
<dbReference type="GO" id="GO:0048034">
    <property type="term" value="P:heme O biosynthetic process"/>
    <property type="evidence" value="ECO:0007669"/>
    <property type="project" value="UniProtKB-UniRule"/>
</dbReference>
<dbReference type="CDD" id="cd13957">
    <property type="entry name" value="PT_UbiA_Cox10"/>
    <property type="match status" value="1"/>
</dbReference>
<dbReference type="Gene3D" id="1.10.357.140">
    <property type="entry name" value="UbiA prenyltransferase"/>
    <property type="match status" value="1"/>
</dbReference>
<dbReference type="HAMAP" id="MF_00154">
    <property type="entry name" value="CyoE_CtaB"/>
    <property type="match status" value="1"/>
</dbReference>
<dbReference type="InterPro" id="IPR006369">
    <property type="entry name" value="Protohaem_IX_farnesylTrfase"/>
</dbReference>
<dbReference type="InterPro" id="IPR000537">
    <property type="entry name" value="UbiA_prenyltransferase"/>
</dbReference>
<dbReference type="InterPro" id="IPR030470">
    <property type="entry name" value="UbiA_prenylTrfase_CS"/>
</dbReference>
<dbReference type="InterPro" id="IPR044878">
    <property type="entry name" value="UbiA_sf"/>
</dbReference>
<dbReference type="NCBIfam" id="TIGR01473">
    <property type="entry name" value="cyoE_ctaB"/>
    <property type="match status" value="1"/>
</dbReference>
<dbReference type="NCBIfam" id="NF003349">
    <property type="entry name" value="PRK04375.1-2"/>
    <property type="match status" value="1"/>
</dbReference>
<dbReference type="PANTHER" id="PTHR43448:SF7">
    <property type="entry name" value="4-HYDROXYBENZOATE SOLANESYLTRANSFERASE"/>
    <property type="match status" value="1"/>
</dbReference>
<dbReference type="PANTHER" id="PTHR43448">
    <property type="entry name" value="PROTOHEME IX FARNESYLTRANSFERASE, MITOCHONDRIAL"/>
    <property type="match status" value="1"/>
</dbReference>
<dbReference type="Pfam" id="PF01040">
    <property type="entry name" value="UbiA"/>
    <property type="match status" value="1"/>
</dbReference>
<dbReference type="PROSITE" id="PS00943">
    <property type="entry name" value="UBIA"/>
    <property type="match status" value="1"/>
</dbReference>
<keyword id="KW-0997">Cell inner membrane</keyword>
<keyword id="KW-1003">Cell membrane</keyword>
<keyword id="KW-0350">Heme biosynthesis</keyword>
<keyword id="KW-0472">Membrane</keyword>
<keyword id="KW-0808">Transferase</keyword>
<keyword id="KW-0812">Transmembrane</keyword>
<keyword id="KW-1133">Transmembrane helix</keyword>
<evidence type="ECO:0000255" key="1">
    <source>
        <dbReference type="HAMAP-Rule" id="MF_00154"/>
    </source>
</evidence>
<comment type="function">
    <text evidence="1">Converts heme B (protoheme IX) to heme O by substitution of the vinyl group on carbon 2 of heme B porphyrin ring with a hydroxyethyl farnesyl side group.</text>
</comment>
<comment type="catalytic activity">
    <reaction evidence="1">
        <text>heme b + (2E,6E)-farnesyl diphosphate + H2O = Fe(II)-heme o + diphosphate</text>
        <dbReference type="Rhea" id="RHEA:28070"/>
        <dbReference type="ChEBI" id="CHEBI:15377"/>
        <dbReference type="ChEBI" id="CHEBI:33019"/>
        <dbReference type="ChEBI" id="CHEBI:60344"/>
        <dbReference type="ChEBI" id="CHEBI:60530"/>
        <dbReference type="ChEBI" id="CHEBI:175763"/>
        <dbReference type="EC" id="2.5.1.141"/>
    </reaction>
</comment>
<comment type="pathway">
    <text evidence="1">Porphyrin-containing compound metabolism; heme O biosynthesis; heme O from protoheme: step 1/1.</text>
</comment>
<comment type="subcellular location">
    <subcellularLocation>
        <location evidence="1">Cell inner membrane</location>
        <topology evidence="1">Multi-pass membrane protein</topology>
    </subcellularLocation>
</comment>
<comment type="miscellaneous">
    <text evidence="1">Carbon 2 of the heme B porphyrin ring is defined according to the Fischer nomenclature.</text>
</comment>
<comment type="similarity">
    <text evidence="1">Belongs to the UbiA prenyltransferase family. Protoheme IX farnesyltransferase subfamily.</text>
</comment>
<accession>Q98LF1</accession>
<sequence>MSTREGRLKDTSIRLSEATAADFFALLKPRVMALAVFTAFVGLMVAPGAVNPVIAVIAIAAIAIGAGAAGALNMWYDADIDALMSRTSKRPVPSGRVTPGEALGFGLVLSALSVMTLGVLVGWLAASLLAFTIFFYIVIYTMWLKRSTPQNIVIGGAAGALPPVIGWAAATGAVGVESLVLFLIIFLWTPPHFWALALFKVGDYAAAGIPMMPNVAGPASTRRQILAYALLLAPVGVLPWAFGFTSGYYGIASAALGVGFIWHSWKVRAASETELKPAKALFAYSIVYLFAVFAALLADTIAMRALMSVGA</sequence>
<reference key="1">
    <citation type="journal article" date="2000" name="DNA Res.">
        <title>Complete genome structure of the nitrogen-fixing symbiotic bacterium Mesorhizobium loti.</title>
        <authorList>
            <person name="Kaneko T."/>
            <person name="Nakamura Y."/>
            <person name="Sato S."/>
            <person name="Asamizu E."/>
            <person name="Kato T."/>
            <person name="Sasamoto S."/>
            <person name="Watanabe A."/>
            <person name="Idesawa K."/>
            <person name="Ishikawa A."/>
            <person name="Kawashima K."/>
            <person name="Kimura T."/>
            <person name="Kishida Y."/>
            <person name="Kiyokawa C."/>
            <person name="Kohara M."/>
            <person name="Matsumoto M."/>
            <person name="Matsuno A."/>
            <person name="Mochizuki Y."/>
            <person name="Nakayama S."/>
            <person name="Nakazaki N."/>
            <person name="Shimpo S."/>
            <person name="Sugimoto M."/>
            <person name="Takeuchi C."/>
            <person name="Yamada M."/>
            <person name="Tabata S."/>
        </authorList>
    </citation>
    <scope>NUCLEOTIDE SEQUENCE [LARGE SCALE GENOMIC DNA]</scope>
    <source>
        <strain>LMG 29417 / CECT 9101 / MAFF 303099</strain>
    </source>
</reference>
<organism>
    <name type="scientific">Mesorhizobium japonicum (strain LMG 29417 / CECT 9101 / MAFF 303099)</name>
    <name type="common">Mesorhizobium loti (strain MAFF 303099)</name>
    <dbReference type="NCBI Taxonomy" id="266835"/>
    <lineage>
        <taxon>Bacteria</taxon>
        <taxon>Pseudomonadati</taxon>
        <taxon>Pseudomonadota</taxon>
        <taxon>Alphaproteobacteria</taxon>
        <taxon>Hyphomicrobiales</taxon>
        <taxon>Phyllobacteriaceae</taxon>
        <taxon>Mesorhizobium</taxon>
    </lineage>
</organism>
<feature type="chain" id="PRO_0000327131" description="Protoheme IX farnesyltransferase 1">
    <location>
        <begin position="1"/>
        <end position="311"/>
    </location>
</feature>
<feature type="transmembrane region" description="Helical" evidence="1">
    <location>
        <begin position="31"/>
        <end position="51"/>
    </location>
</feature>
<feature type="transmembrane region" description="Helical" evidence="1">
    <location>
        <begin position="52"/>
        <end position="72"/>
    </location>
</feature>
<feature type="transmembrane region" description="Helical" evidence="1">
    <location>
        <begin position="97"/>
        <end position="117"/>
    </location>
</feature>
<feature type="transmembrane region" description="Helical" evidence="1">
    <location>
        <begin position="119"/>
        <end position="139"/>
    </location>
</feature>
<feature type="transmembrane region" description="Helical" evidence="1">
    <location>
        <begin position="152"/>
        <end position="172"/>
    </location>
</feature>
<feature type="transmembrane region" description="Helical" evidence="1">
    <location>
        <begin position="179"/>
        <end position="199"/>
    </location>
</feature>
<feature type="transmembrane region" description="Helical" evidence="1">
    <location>
        <begin position="225"/>
        <end position="245"/>
    </location>
</feature>
<feature type="transmembrane region" description="Helical" evidence="1">
    <location>
        <begin position="247"/>
        <end position="267"/>
    </location>
</feature>
<feature type="transmembrane region" description="Helical" evidence="1">
    <location>
        <begin position="281"/>
        <end position="301"/>
    </location>
</feature>